<dbReference type="EMBL" id="X15986">
    <property type="protein sequence ID" value="CAA34117.1"/>
    <property type="molecule type" value="mRNA"/>
</dbReference>
<dbReference type="EMBL" id="X53067">
    <property type="protein sequence ID" value="CAA37242.1"/>
    <property type="molecule type" value="mRNA"/>
</dbReference>
<dbReference type="EMBL" id="X51577">
    <property type="protein sequence ID" value="CAA35930.1"/>
    <property type="molecule type" value="Genomic_DNA"/>
</dbReference>
<dbReference type="EMBL" id="X51578">
    <property type="protein sequence ID" value="CAA35930.1"/>
    <property type="status" value="JOINED"/>
    <property type="molecule type" value="Genomic_DNA"/>
</dbReference>
<dbReference type="EMBL" id="X51579">
    <property type="protein sequence ID" value="CAA35930.1"/>
    <property type="status" value="JOINED"/>
    <property type="molecule type" value="Genomic_DNA"/>
</dbReference>
<dbReference type="EMBL" id="M57470">
    <property type="protein sequence ID" value="AAA37667.1"/>
    <property type="molecule type" value="mRNA"/>
</dbReference>
<dbReference type="EMBL" id="X66532">
    <property type="protein sequence ID" value="CAA47143.1"/>
    <property type="molecule type" value="mRNA"/>
</dbReference>
<dbReference type="EMBL" id="AK004298">
    <property type="status" value="NOT_ANNOTATED_CDS"/>
    <property type="molecule type" value="mRNA"/>
</dbReference>
<dbReference type="EMBL" id="BC002063">
    <property type="protein sequence ID" value="AAH02063.1"/>
    <property type="molecule type" value="mRNA"/>
</dbReference>
<dbReference type="EMBL" id="BC099479">
    <property type="protein sequence ID" value="AAH99479.1"/>
    <property type="molecule type" value="mRNA"/>
</dbReference>
<dbReference type="EMBL" id="X51903">
    <property type="protein sequence ID" value="CAA36183.1"/>
    <property type="molecule type" value="mRNA"/>
</dbReference>
<dbReference type="EMBL" id="M33214">
    <property type="protein sequence ID" value="AAA37313.1"/>
    <property type="status" value="ALT_FRAME"/>
    <property type="molecule type" value="mRNA"/>
</dbReference>
<dbReference type="EMBL" id="M14087">
    <property type="protein sequence ID" value="AAA36172.1"/>
    <property type="molecule type" value="mRNA"/>
</dbReference>
<dbReference type="CCDS" id="CCDS27628.1"/>
<dbReference type="PIR" id="B26495">
    <property type="entry name" value="B26495"/>
</dbReference>
<dbReference type="PIR" id="S07162">
    <property type="entry name" value="S07162"/>
</dbReference>
<dbReference type="PIR" id="S11718">
    <property type="entry name" value="LNMSGB"/>
</dbReference>
<dbReference type="RefSeq" id="NP_032521.1">
    <property type="nucleotide sequence ID" value="NM_008495.2"/>
</dbReference>
<dbReference type="PDB" id="4LBQ">
    <property type="method" value="X-ray"/>
    <property type="resolution" value="2.40 A"/>
    <property type="chains" value="A/B/C/D=1-135"/>
</dbReference>
<dbReference type="PDBsum" id="4LBQ"/>
<dbReference type="SMR" id="P16045"/>
<dbReference type="BioGRID" id="201142">
    <property type="interactions" value="21"/>
</dbReference>
<dbReference type="ComplexPortal" id="CPX-94">
    <property type="entry name" value="Galectin-1 complex"/>
</dbReference>
<dbReference type="FunCoup" id="P16045">
    <property type="interactions" value="532"/>
</dbReference>
<dbReference type="IntAct" id="P16045">
    <property type="interactions" value="7"/>
</dbReference>
<dbReference type="MINT" id="P16045"/>
<dbReference type="STRING" id="10090.ENSMUSP00000086795"/>
<dbReference type="BindingDB" id="P16045"/>
<dbReference type="ChEMBL" id="CHEMBL4105904"/>
<dbReference type="UniLectin" id="P16045"/>
<dbReference type="GlyGen" id="P16045">
    <property type="glycosylation" value="1 site, 1 O-linked glycan (1 site)"/>
</dbReference>
<dbReference type="iPTMnet" id="P16045"/>
<dbReference type="PhosphoSitePlus" id="P16045"/>
<dbReference type="SwissPalm" id="P16045"/>
<dbReference type="REPRODUCTION-2DPAGE" id="IPI00229517"/>
<dbReference type="REPRODUCTION-2DPAGE" id="P16045"/>
<dbReference type="CPTAC" id="non-CPTAC-3587"/>
<dbReference type="jPOST" id="P16045"/>
<dbReference type="PaxDb" id="10090-ENSMUSP00000086795"/>
<dbReference type="PeptideAtlas" id="P16045"/>
<dbReference type="ProteomicsDB" id="264932"/>
<dbReference type="Pumba" id="P16045"/>
<dbReference type="TopDownProteomics" id="P16045"/>
<dbReference type="ABCD" id="P16045">
    <property type="antibodies" value="2 sequenced antibodies"/>
</dbReference>
<dbReference type="Antibodypedia" id="269">
    <property type="antibodies" value="1024 antibodies from 47 providers"/>
</dbReference>
<dbReference type="DNASU" id="16852"/>
<dbReference type="Ensembl" id="ENSMUST00000089377.6">
    <property type="protein sequence ID" value="ENSMUSP00000086795.6"/>
    <property type="gene ID" value="ENSMUSG00000068220.7"/>
</dbReference>
<dbReference type="GeneID" id="16852"/>
<dbReference type="KEGG" id="mmu:16852"/>
<dbReference type="UCSC" id="uc007wrv.1">
    <property type="organism name" value="mouse"/>
</dbReference>
<dbReference type="AGR" id="MGI:96777"/>
<dbReference type="CTD" id="3956"/>
<dbReference type="MGI" id="MGI:96777">
    <property type="gene designation" value="Lgals1"/>
</dbReference>
<dbReference type="VEuPathDB" id="HostDB:ENSMUSG00000068220"/>
<dbReference type="eggNOG" id="KOG3587">
    <property type="taxonomic scope" value="Eukaryota"/>
</dbReference>
<dbReference type="GeneTree" id="ENSGT00940000155534"/>
<dbReference type="HOGENOM" id="CLU_037794_5_0_1"/>
<dbReference type="InParanoid" id="P16045"/>
<dbReference type="OMA" id="CGVTATQ"/>
<dbReference type="OrthoDB" id="8443340at2759"/>
<dbReference type="PhylomeDB" id="P16045"/>
<dbReference type="TreeFam" id="TF315551"/>
<dbReference type="Reactome" id="R-MMU-381426">
    <property type="pathway name" value="Regulation of Insulin-like Growth Factor (IGF) transport and uptake by Insulin-like Growth Factor Binding Proteins (IGFBPs)"/>
</dbReference>
<dbReference type="Reactome" id="R-MMU-8957275">
    <property type="pathway name" value="Post-translational protein phosphorylation"/>
</dbReference>
<dbReference type="BioGRID-ORCS" id="16852">
    <property type="hits" value="4 hits in 76 CRISPR screens"/>
</dbReference>
<dbReference type="ChiTaRS" id="Lgals1">
    <property type="organism name" value="mouse"/>
</dbReference>
<dbReference type="EvolutionaryTrace" id="P16045"/>
<dbReference type="PRO" id="PR:P16045"/>
<dbReference type="Proteomes" id="UP000000589">
    <property type="component" value="Chromosome 15"/>
</dbReference>
<dbReference type="RNAct" id="P16045">
    <property type="molecule type" value="protein"/>
</dbReference>
<dbReference type="Bgee" id="ENSMUSG00000068220">
    <property type="expression patterns" value="Expressed in endothelial cell of lymphatic vessel and 288 other cell types or tissues"/>
</dbReference>
<dbReference type="ExpressionAtlas" id="P16045">
    <property type="expression patterns" value="baseline and differential"/>
</dbReference>
<dbReference type="GO" id="GO:0062023">
    <property type="term" value="C:collagen-containing extracellular matrix"/>
    <property type="evidence" value="ECO:0007005"/>
    <property type="project" value="BHF-UCL"/>
</dbReference>
<dbReference type="GO" id="GO:0005829">
    <property type="term" value="C:cytosol"/>
    <property type="evidence" value="ECO:0007669"/>
    <property type="project" value="Ensembl"/>
</dbReference>
<dbReference type="GO" id="GO:0005576">
    <property type="term" value="C:extracellular region"/>
    <property type="evidence" value="ECO:0000304"/>
    <property type="project" value="Reactome"/>
</dbReference>
<dbReference type="GO" id="GO:0005615">
    <property type="term" value="C:extracellular space"/>
    <property type="evidence" value="ECO:0000314"/>
    <property type="project" value="MGI"/>
</dbReference>
<dbReference type="GO" id="GO:1990724">
    <property type="term" value="C:galectin complex"/>
    <property type="evidence" value="ECO:0000266"/>
    <property type="project" value="ComplexPortal"/>
</dbReference>
<dbReference type="GO" id="GO:0005886">
    <property type="term" value="C:plasma membrane"/>
    <property type="evidence" value="ECO:0007669"/>
    <property type="project" value="Ensembl"/>
</dbReference>
<dbReference type="GO" id="GO:0030246">
    <property type="term" value="F:carbohydrate binding"/>
    <property type="evidence" value="ECO:0000314"/>
    <property type="project" value="MGI"/>
</dbReference>
<dbReference type="GO" id="GO:0005534">
    <property type="term" value="F:galactose binding"/>
    <property type="evidence" value="ECO:0000303"/>
    <property type="project" value="UniProtKB"/>
</dbReference>
<dbReference type="GO" id="GO:0048018">
    <property type="term" value="F:receptor ligand activity"/>
    <property type="evidence" value="ECO:0007669"/>
    <property type="project" value="Ensembl"/>
</dbReference>
<dbReference type="GO" id="GO:0006915">
    <property type="term" value="P:apoptotic process"/>
    <property type="evidence" value="ECO:0007669"/>
    <property type="project" value="UniProtKB-KW"/>
</dbReference>
<dbReference type="GO" id="GO:0098609">
    <property type="term" value="P:cell-cell adhesion"/>
    <property type="evidence" value="ECO:0000266"/>
    <property type="project" value="ComplexPortal"/>
</dbReference>
<dbReference type="GO" id="GO:0007157">
    <property type="term" value="P:heterophilic cell-cell adhesion via plasma membrane cell adhesion molecules"/>
    <property type="evidence" value="ECO:0000303"/>
    <property type="project" value="UniProtKB"/>
</dbReference>
<dbReference type="GO" id="GO:0045445">
    <property type="term" value="P:myoblast differentiation"/>
    <property type="evidence" value="ECO:0000314"/>
    <property type="project" value="MGI"/>
</dbReference>
<dbReference type="GO" id="GO:2000329">
    <property type="term" value="P:negative regulation of T-helper 17 cell lineage commitment"/>
    <property type="evidence" value="ECO:0007669"/>
    <property type="project" value="Ensembl"/>
</dbReference>
<dbReference type="GO" id="GO:0002317">
    <property type="term" value="P:plasma cell differentiation"/>
    <property type="evidence" value="ECO:0000314"/>
    <property type="project" value="MGI"/>
</dbReference>
<dbReference type="GO" id="GO:0043065">
    <property type="term" value="P:positive regulation of apoptotic process"/>
    <property type="evidence" value="ECO:0000266"/>
    <property type="project" value="ComplexPortal"/>
</dbReference>
<dbReference type="GO" id="GO:0050729">
    <property type="term" value="P:positive regulation of inflammatory response"/>
    <property type="evidence" value="ECO:0000266"/>
    <property type="project" value="ComplexPortal"/>
</dbReference>
<dbReference type="GO" id="GO:0046598">
    <property type="term" value="P:positive regulation of viral entry into host cell"/>
    <property type="evidence" value="ECO:0007669"/>
    <property type="project" value="Ensembl"/>
</dbReference>
<dbReference type="GO" id="GO:0031295">
    <property type="term" value="P:T cell costimulation"/>
    <property type="evidence" value="ECO:0000314"/>
    <property type="project" value="MGI"/>
</dbReference>
<dbReference type="CDD" id="cd00070">
    <property type="entry name" value="GLECT"/>
    <property type="match status" value="1"/>
</dbReference>
<dbReference type="FunFam" id="2.60.120.200:FF:000021">
    <property type="entry name" value="Galectin"/>
    <property type="match status" value="1"/>
</dbReference>
<dbReference type="Gene3D" id="2.60.120.200">
    <property type="match status" value="1"/>
</dbReference>
<dbReference type="InterPro" id="IPR013320">
    <property type="entry name" value="ConA-like_dom_sf"/>
</dbReference>
<dbReference type="InterPro" id="IPR044156">
    <property type="entry name" value="Galectin-like"/>
</dbReference>
<dbReference type="InterPro" id="IPR001079">
    <property type="entry name" value="Galectin_CRD"/>
</dbReference>
<dbReference type="PANTHER" id="PTHR11346">
    <property type="entry name" value="GALECTIN"/>
    <property type="match status" value="1"/>
</dbReference>
<dbReference type="PANTHER" id="PTHR11346:SF97">
    <property type="entry name" value="GALECTIN-1"/>
    <property type="match status" value="1"/>
</dbReference>
<dbReference type="Pfam" id="PF00337">
    <property type="entry name" value="Gal-bind_lectin"/>
    <property type="match status" value="1"/>
</dbReference>
<dbReference type="SMART" id="SM00908">
    <property type="entry name" value="Gal-bind_lectin"/>
    <property type="match status" value="1"/>
</dbReference>
<dbReference type="SMART" id="SM00276">
    <property type="entry name" value="GLECT"/>
    <property type="match status" value="1"/>
</dbReference>
<dbReference type="SUPFAM" id="SSF49899">
    <property type="entry name" value="Concanavalin A-like lectins/glucanases"/>
    <property type="match status" value="1"/>
</dbReference>
<dbReference type="PROSITE" id="PS51304">
    <property type="entry name" value="GALECTIN"/>
    <property type="match status" value="1"/>
</dbReference>
<protein>
    <recommendedName>
        <fullName>Galectin-1</fullName>
        <shortName>Gal-1</shortName>
    </recommendedName>
    <alternativeName>
        <fullName>14 kDa lectin</fullName>
    </alternativeName>
    <alternativeName>
        <fullName>Beta-galactoside-binding lectin L-14-I</fullName>
    </alternativeName>
    <alternativeName>
        <fullName>Galaptin</fullName>
    </alternativeName>
    <alternativeName>
        <fullName>Lactose-binding lectin 1</fullName>
    </alternativeName>
    <alternativeName>
        <fullName>Lectin galactoside-binding soluble 1</fullName>
    </alternativeName>
    <alternativeName>
        <fullName>S-Lac lectin 1</fullName>
    </alternativeName>
</protein>
<sequence length="135" mass="14866">MACGLVASNLNLKPGECLKVRGEVASDAKSFVLNLGKDSNNLCLHFNPRFNAHGDANTIVCNTKEDGTWGTEHREPAFPFQPGSITEVCITFDQADLTIKLPDGHEFKFPNRLNMEAINYMAADGDFKIKCVAFE</sequence>
<comment type="function">
    <text evidence="2 4">Lectin that binds beta-galactoside and a wide array of complex carbohydrates. Plays a role in regulating apoptosis, cell proliferation and cell differentiation. Inhibits CD45 protein phosphatase activity and therefore the dephosphorylation of Lyn kinase. Strong inducer of T-cell apoptosis. Plays a negative role in Th17 cell differentiation via activation of the receptor CD69.</text>
</comment>
<comment type="subunit">
    <text evidence="2">Homodimer. Binds LGALS3BP. Interacts with CD2, CD3, CD4, CD6, CD7, CD43, ALCAM and CD45. Interacts with laminin (via poly-N-acetyllactosamine). Interacts with SUSD2. Interacts with cargo receptor TMED10; the interaction mediates the translocation from the cytoplasm into the ERGIC (endoplasmic reticulum-Golgi intermediate compartment) and thereby secretion. Interacts with CD69.</text>
</comment>
<comment type="subcellular location">
    <subcellularLocation>
        <location evidence="2">Secreted</location>
        <location evidence="2">Extracellular space</location>
        <location evidence="2">Extracellular matrix</location>
    </subcellularLocation>
    <subcellularLocation>
        <location evidence="2">Cytoplasm</location>
    </subcellularLocation>
    <subcellularLocation>
        <location evidence="2">Secreted</location>
    </subcellularLocation>
    <text evidence="2">Can be secreted; the secretion is dependent on protein unfolding and facilitated by the cargo receptor TMED10; it results in protein translocation from the cytoplasm into the ERGIC (endoplasmic reticulum-Golgi intermediate compartment) followed by vesicle entry and secretion.</text>
</comment>
<comment type="caution">
    <text evidence="6">Was originally thought to originate from human.</text>
</comment>
<comment type="sequence caution" evidence="5">
    <conflict type="frameshift">
        <sequence resource="EMBL-CDS" id="AAA37313"/>
    </conflict>
</comment>
<comment type="sequence caution" evidence="5">
    <conflict type="frameshift">
        <sequence resource="EMBL" id="AK004298"/>
    </conflict>
</comment>
<keyword id="KW-0002">3D-structure</keyword>
<keyword id="KW-0007">Acetylation</keyword>
<keyword id="KW-0053">Apoptosis</keyword>
<keyword id="KW-0963">Cytoplasm</keyword>
<keyword id="KW-0272">Extracellular matrix</keyword>
<keyword id="KW-0430">Lectin</keyword>
<keyword id="KW-0597">Phosphoprotein</keyword>
<keyword id="KW-1185">Reference proteome</keyword>
<keyword id="KW-0964">Secreted</keyword>
<proteinExistence type="evidence at protein level"/>
<accession>P16045</accession>
<accession>P05163</accession>
<accession>P11946</accession>
<accession>P17601</accession>
<accession>Q4FZH4</accession>
<accession>Q99M27</accession>
<accession>Q9D0X0</accession>
<reference key="1">
    <citation type="journal article" date="1989" name="Biochem. J.">
        <title>The sequence of the mouse 14 kDa beta-galactoside-binding lectin and evidence for its synthesis on free cytoplasmic ribosomes.</title>
        <authorList>
            <person name="Wilson T.J.G."/>
            <person name="Firth M.N."/>
            <person name="Powell J.T."/>
            <person name="Harrison F.L."/>
        </authorList>
    </citation>
    <scope>NUCLEOTIDE SEQUENCE [MRNA]</scope>
    <scope>FUNCTION</scope>
    <source>
        <strain>C3H/HeJ</strain>
        <tissue>Skeletal muscle</tissue>
    </source>
</reference>
<reference key="2">
    <citation type="journal article" date="1991" name="Biochim. Biophys. Acta">
        <title>Structure and expression of the negative growth factor mouse beta-galactoside binding protein gene.</title>
        <authorList>
            <person name="Chiariotti L."/>
            <person name="Wells V."/>
            <person name="Bruni C.B."/>
            <person name="Mallucci L."/>
        </authorList>
    </citation>
    <scope>NUCLEOTIDE SEQUENCE [GENOMIC DNA]</scope>
    <source>
        <strain>BALB/cJ</strain>
        <tissue>Liver</tissue>
    </source>
</reference>
<reference key="3">
    <citation type="journal article" date="1991" name="Cell">
        <title>Identification of an autocrine negative growth factor: mouse beta-galactoside-binding protein is a cytostatic factor and cell growth regulator.</title>
        <authorList>
            <person name="Wells V."/>
            <person name="Mallucci L."/>
        </authorList>
    </citation>
    <scope>NUCLEOTIDE SEQUENCE [MRNA]</scope>
</reference>
<reference key="4">
    <citation type="journal article" date="1992" name="Development">
        <title>Expression of the L14 lectin during mouse embryogenesis suggests multiple roles during pre- and post-implantation development.</title>
        <authorList>
            <person name="Poirier F."/>
            <person name="Timmons P.M."/>
            <person name="Chan C.T."/>
            <person name="Guenet J.-L."/>
            <person name="Rigby P.W."/>
        </authorList>
    </citation>
    <scope>NUCLEOTIDE SEQUENCE [MRNA]</scope>
</reference>
<reference key="5">
    <citation type="journal article" date="2005" name="Science">
        <title>The transcriptional landscape of the mammalian genome.</title>
        <authorList>
            <person name="Carninci P."/>
            <person name="Kasukawa T."/>
            <person name="Katayama S."/>
            <person name="Gough J."/>
            <person name="Frith M.C."/>
            <person name="Maeda N."/>
            <person name="Oyama R."/>
            <person name="Ravasi T."/>
            <person name="Lenhard B."/>
            <person name="Wells C."/>
            <person name="Kodzius R."/>
            <person name="Shimokawa K."/>
            <person name="Bajic V.B."/>
            <person name="Brenner S.E."/>
            <person name="Batalov S."/>
            <person name="Forrest A.R."/>
            <person name="Zavolan M."/>
            <person name="Davis M.J."/>
            <person name="Wilming L.G."/>
            <person name="Aidinis V."/>
            <person name="Allen J.E."/>
            <person name="Ambesi-Impiombato A."/>
            <person name="Apweiler R."/>
            <person name="Aturaliya R.N."/>
            <person name="Bailey T.L."/>
            <person name="Bansal M."/>
            <person name="Baxter L."/>
            <person name="Beisel K.W."/>
            <person name="Bersano T."/>
            <person name="Bono H."/>
            <person name="Chalk A.M."/>
            <person name="Chiu K.P."/>
            <person name="Choudhary V."/>
            <person name="Christoffels A."/>
            <person name="Clutterbuck D.R."/>
            <person name="Crowe M.L."/>
            <person name="Dalla E."/>
            <person name="Dalrymple B.P."/>
            <person name="de Bono B."/>
            <person name="Della Gatta G."/>
            <person name="di Bernardo D."/>
            <person name="Down T."/>
            <person name="Engstrom P."/>
            <person name="Fagiolini M."/>
            <person name="Faulkner G."/>
            <person name="Fletcher C.F."/>
            <person name="Fukushima T."/>
            <person name="Furuno M."/>
            <person name="Futaki S."/>
            <person name="Gariboldi M."/>
            <person name="Georgii-Hemming P."/>
            <person name="Gingeras T.R."/>
            <person name="Gojobori T."/>
            <person name="Green R.E."/>
            <person name="Gustincich S."/>
            <person name="Harbers M."/>
            <person name="Hayashi Y."/>
            <person name="Hensch T.K."/>
            <person name="Hirokawa N."/>
            <person name="Hill D."/>
            <person name="Huminiecki L."/>
            <person name="Iacono M."/>
            <person name="Ikeo K."/>
            <person name="Iwama A."/>
            <person name="Ishikawa T."/>
            <person name="Jakt M."/>
            <person name="Kanapin A."/>
            <person name="Katoh M."/>
            <person name="Kawasawa Y."/>
            <person name="Kelso J."/>
            <person name="Kitamura H."/>
            <person name="Kitano H."/>
            <person name="Kollias G."/>
            <person name="Krishnan S.P."/>
            <person name="Kruger A."/>
            <person name="Kummerfeld S.K."/>
            <person name="Kurochkin I.V."/>
            <person name="Lareau L.F."/>
            <person name="Lazarevic D."/>
            <person name="Lipovich L."/>
            <person name="Liu J."/>
            <person name="Liuni S."/>
            <person name="McWilliam S."/>
            <person name="Madan Babu M."/>
            <person name="Madera M."/>
            <person name="Marchionni L."/>
            <person name="Matsuda H."/>
            <person name="Matsuzawa S."/>
            <person name="Miki H."/>
            <person name="Mignone F."/>
            <person name="Miyake S."/>
            <person name="Morris K."/>
            <person name="Mottagui-Tabar S."/>
            <person name="Mulder N."/>
            <person name="Nakano N."/>
            <person name="Nakauchi H."/>
            <person name="Ng P."/>
            <person name="Nilsson R."/>
            <person name="Nishiguchi S."/>
            <person name="Nishikawa S."/>
            <person name="Nori F."/>
            <person name="Ohara O."/>
            <person name="Okazaki Y."/>
            <person name="Orlando V."/>
            <person name="Pang K.C."/>
            <person name="Pavan W.J."/>
            <person name="Pavesi G."/>
            <person name="Pesole G."/>
            <person name="Petrovsky N."/>
            <person name="Piazza S."/>
            <person name="Reed J."/>
            <person name="Reid J.F."/>
            <person name="Ring B.Z."/>
            <person name="Ringwald M."/>
            <person name="Rost B."/>
            <person name="Ruan Y."/>
            <person name="Salzberg S.L."/>
            <person name="Sandelin A."/>
            <person name="Schneider C."/>
            <person name="Schoenbach C."/>
            <person name="Sekiguchi K."/>
            <person name="Semple C.A."/>
            <person name="Seno S."/>
            <person name="Sessa L."/>
            <person name="Sheng Y."/>
            <person name="Shibata Y."/>
            <person name="Shimada H."/>
            <person name="Shimada K."/>
            <person name="Silva D."/>
            <person name="Sinclair B."/>
            <person name="Sperling S."/>
            <person name="Stupka E."/>
            <person name="Sugiura K."/>
            <person name="Sultana R."/>
            <person name="Takenaka Y."/>
            <person name="Taki K."/>
            <person name="Tammoja K."/>
            <person name="Tan S.L."/>
            <person name="Tang S."/>
            <person name="Taylor M.S."/>
            <person name="Tegner J."/>
            <person name="Teichmann S.A."/>
            <person name="Ueda H.R."/>
            <person name="van Nimwegen E."/>
            <person name="Verardo R."/>
            <person name="Wei C.L."/>
            <person name="Yagi K."/>
            <person name="Yamanishi H."/>
            <person name="Zabarovsky E."/>
            <person name="Zhu S."/>
            <person name="Zimmer A."/>
            <person name="Hide W."/>
            <person name="Bult C."/>
            <person name="Grimmond S.M."/>
            <person name="Teasdale R.D."/>
            <person name="Liu E.T."/>
            <person name="Brusic V."/>
            <person name="Quackenbush J."/>
            <person name="Wahlestedt C."/>
            <person name="Mattick J.S."/>
            <person name="Hume D.A."/>
            <person name="Kai C."/>
            <person name="Sasaki D."/>
            <person name="Tomaru Y."/>
            <person name="Fukuda S."/>
            <person name="Kanamori-Katayama M."/>
            <person name="Suzuki M."/>
            <person name="Aoki J."/>
            <person name="Arakawa T."/>
            <person name="Iida J."/>
            <person name="Imamura K."/>
            <person name="Itoh M."/>
            <person name="Kato T."/>
            <person name="Kawaji H."/>
            <person name="Kawagashira N."/>
            <person name="Kawashima T."/>
            <person name="Kojima M."/>
            <person name="Kondo S."/>
            <person name="Konno H."/>
            <person name="Nakano K."/>
            <person name="Ninomiya N."/>
            <person name="Nishio T."/>
            <person name="Okada M."/>
            <person name="Plessy C."/>
            <person name="Shibata K."/>
            <person name="Shiraki T."/>
            <person name="Suzuki S."/>
            <person name="Tagami M."/>
            <person name="Waki K."/>
            <person name="Watahiki A."/>
            <person name="Okamura-Oho Y."/>
            <person name="Suzuki H."/>
            <person name="Kawai J."/>
            <person name="Hayashizaki Y."/>
        </authorList>
    </citation>
    <scope>NUCLEOTIDE SEQUENCE [LARGE SCALE MRNA]</scope>
    <source>
        <strain>C57BL/6J</strain>
        <tissue>Embryo</tissue>
    </source>
</reference>
<reference key="6">
    <citation type="journal article" date="2004" name="Genome Res.">
        <title>The status, quality, and expansion of the NIH full-length cDNA project: the Mammalian Gene Collection (MGC).</title>
        <authorList>
            <consortium name="The MGC Project Team"/>
        </authorList>
    </citation>
    <scope>NUCLEOTIDE SEQUENCE [LARGE SCALE MRNA]</scope>
    <source>
        <strain>Czech II</strain>
        <strain>NIH Black Swiss</strain>
        <tissue>Mammary gland</tissue>
        <tissue>Thyroid</tissue>
    </source>
</reference>
<reference key="7">
    <citation type="journal article" date="1990" name="J. Cell Biol.">
        <title>Evidence for export of a muscle lectin from cytosol to extracellular matrix and for a novel secretory mechanism.</title>
        <authorList>
            <person name="Cooper D.N.W."/>
            <person name="Barondes S.H."/>
        </authorList>
    </citation>
    <scope>NUCLEOTIDE SEQUENCE [MRNA] OF 1-107</scope>
    <source>
        <tissue>Skeletal muscle</tissue>
    </source>
</reference>
<reference key="8">
    <citation type="journal article" date="1988" name="Cancer Res.">
        <title>Expression of two different endogenous galactoside-binding lectins sharing sequence homology.</title>
        <authorList>
            <person name="Raz A."/>
            <person name="Carmi P."/>
            <person name="Pazerni G."/>
        </authorList>
    </citation>
    <scope>NUCLEOTIDE SEQUENCE [MRNA] OF 1-105</scope>
</reference>
<reference key="9">
    <citation type="journal article" date="1986" name="Proc. Natl. Acad. Sci. U.S.A.">
        <title>Evidence that a human soluble beta-galactoside-binding lectin is encoded by a family of genes.</title>
        <authorList>
            <person name="Gitt M.A."/>
            <person name="Barondes S.H."/>
        </authorList>
    </citation>
    <scope>NUCLEOTIDE SEQUENCE [MRNA] OF 68-134</scope>
</reference>
<reference key="10">
    <citation type="journal article" date="2010" name="Cell">
        <title>A tissue-specific atlas of mouse protein phosphorylation and expression.</title>
        <authorList>
            <person name="Huttlin E.L."/>
            <person name="Jedrychowski M.P."/>
            <person name="Elias J.E."/>
            <person name="Goswami T."/>
            <person name="Rad R."/>
            <person name="Beausoleil S.A."/>
            <person name="Villen J."/>
            <person name="Haas W."/>
            <person name="Sowa M.E."/>
            <person name="Gygi S.P."/>
        </authorList>
    </citation>
    <scope>IDENTIFICATION BY MASS SPECTROMETRY [LARGE SCALE ANALYSIS]</scope>
    <source>
        <tissue>Brain</tissue>
        <tissue>Brown adipose tissue</tissue>
        <tissue>Heart</tissue>
        <tissue>Kidney</tissue>
        <tissue>Liver</tissue>
        <tissue>Lung</tissue>
        <tissue>Pancreas</tissue>
        <tissue>Spleen</tissue>
        <tissue>Testis</tissue>
    </source>
</reference>
<reference key="11">
    <citation type="journal article" date="2013" name="Mol. Cell">
        <title>SIRT5-mediated lysine desuccinylation impacts diverse metabolic pathways.</title>
        <authorList>
            <person name="Park J."/>
            <person name="Chen Y."/>
            <person name="Tishkoff D.X."/>
            <person name="Peng C."/>
            <person name="Tan M."/>
            <person name="Dai L."/>
            <person name="Xie Z."/>
            <person name="Zhang Y."/>
            <person name="Zwaans B.M."/>
            <person name="Skinner M.E."/>
            <person name="Lombard D.B."/>
            <person name="Zhao Y."/>
        </authorList>
    </citation>
    <scope>ACETYLATION [LARGE SCALE ANALYSIS] AT LYS-13; LYS-19; LYS-29; LYS-108 AND LYS-128</scope>
    <scope>SUCCINYLATION [LARGE SCALE ANALYSIS] AT LYS-108</scope>
    <scope>IDENTIFICATION BY MASS SPECTROMETRY [LARGE SCALE ANALYSIS]</scope>
    <source>
        <tissue>Embryonic fibroblast</tissue>
    </source>
</reference>
<feature type="initiator methionine" description="Removed" evidence="2">
    <location>
        <position position="1"/>
    </location>
</feature>
<feature type="chain" id="PRO_0000076918" description="Galectin-1">
    <location>
        <begin position="2"/>
        <end position="135"/>
    </location>
</feature>
<feature type="domain" description="Galectin" evidence="3">
    <location>
        <begin position="4"/>
        <end position="135"/>
    </location>
</feature>
<feature type="binding site" evidence="1">
    <location>
        <begin position="45"/>
        <end position="49"/>
    </location>
    <ligand>
        <name>a beta-D-galactoside</name>
        <dbReference type="ChEBI" id="CHEBI:28034"/>
    </ligand>
</feature>
<feature type="binding site" evidence="1">
    <location>
        <position position="53"/>
    </location>
    <ligand>
        <name>a beta-D-galactoside</name>
        <dbReference type="ChEBI" id="CHEBI:28034"/>
    </ligand>
</feature>
<feature type="binding site" evidence="1">
    <location>
        <position position="62"/>
    </location>
    <ligand>
        <name>a beta-D-galactoside</name>
        <dbReference type="ChEBI" id="CHEBI:28034"/>
    </ligand>
</feature>
<feature type="binding site" evidence="1">
    <location>
        <begin position="69"/>
        <end position="72"/>
    </location>
    <ligand>
        <name>a beta-D-galactoside</name>
        <dbReference type="ChEBI" id="CHEBI:28034"/>
    </ligand>
</feature>
<feature type="modified residue" description="N-acetylalanine" evidence="2">
    <location>
        <position position="2"/>
    </location>
</feature>
<feature type="modified residue" description="N6-acetyllysine" evidence="7">
    <location>
        <position position="13"/>
    </location>
</feature>
<feature type="modified residue" description="N6-acetyllysine" evidence="7">
    <location>
        <position position="19"/>
    </location>
</feature>
<feature type="modified residue" description="N6-acetyllysine" evidence="7">
    <location>
        <position position="29"/>
    </location>
</feature>
<feature type="modified residue" description="Phosphoserine" evidence="2">
    <location>
        <position position="30"/>
    </location>
</feature>
<feature type="modified residue" description="N6-acetyllysine; alternate" evidence="7">
    <location>
        <position position="108"/>
    </location>
</feature>
<feature type="modified residue" description="N6-succinyllysine; alternate" evidence="7">
    <location>
        <position position="108"/>
    </location>
</feature>
<feature type="modified residue" description="N6-acetyllysine" evidence="7">
    <location>
        <position position="128"/>
    </location>
</feature>
<feature type="sequence conflict" description="In Ref. 3; AAA37667." evidence="5" ref="3">
    <original>F</original>
    <variation>S</variation>
    <location>
        <position position="78"/>
    </location>
</feature>
<feature type="sequence conflict" description="In Ref. 6; AAH02063." evidence="5" ref="6">
    <original>T</original>
    <variation>I</variation>
    <location>
        <position position="86"/>
    </location>
</feature>
<feature type="sequence conflict" description="In Ref. 9; AAA36172." evidence="5" ref="9">
    <original>CVAF</original>
    <variation>VRGL</variation>
    <location>
        <begin position="131"/>
        <end position="134"/>
    </location>
</feature>
<feature type="strand" evidence="8">
    <location>
        <begin position="6"/>
        <end position="8"/>
    </location>
</feature>
<feature type="strand" evidence="8">
    <location>
        <begin position="17"/>
        <end position="24"/>
    </location>
</feature>
<feature type="strand" evidence="8">
    <location>
        <begin position="33"/>
        <end position="38"/>
    </location>
</feature>
<feature type="strand" evidence="8">
    <location>
        <begin position="41"/>
        <end position="49"/>
    </location>
</feature>
<feature type="strand" evidence="8">
    <location>
        <begin position="58"/>
        <end position="65"/>
    </location>
</feature>
<feature type="strand" evidence="8">
    <location>
        <begin position="73"/>
        <end position="75"/>
    </location>
</feature>
<feature type="strand" evidence="8">
    <location>
        <begin position="84"/>
        <end position="92"/>
    </location>
</feature>
<feature type="strand" evidence="8">
    <location>
        <begin position="94"/>
        <end position="100"/>
    </location>
</feature>
<feature type="strand" evidence="8">
    <location>
        <begin position="106"/>
        <end position="110"/>
    </location>
</feature>
<feature type="strand" evidence="8">
    <location>
        <begin position="120"/>
        <end position="123"/>
    </location>
</feature>
<feature type="strand" evidence="8">
    <location>
        <begin position="127"/>
        <end position="135"/>
    </location>
</feature>
<organism>
    <name type="scientific">Mus musculus</name>
    <name type="common">Mouse</name>
    <dbReference type="NCBI Taxonomy" id="10090"/>
    <lineage>
        <taxon>Eukaryota</taxon>
        <taxon>Metazoa</taxon>
        <taxon>Chordata</taxon>
        <taxon>Craniata</taxon>
        <taxon>Vertebrata</taxon>
        <taxon>Euteleostomi</taxon>
        <taxon>Mammalia</taxon>
        <taxon>Eutheria</taxon>
        <taxon>Euarchontoglires</taxon>
        <taxon>Glires</taxon>
        <taxon>Rodentia</taxon>
        <taxon>Myomorpha</taxon>
        <taxon>Muroidea</taxon>
        <taxon>Muridae</taxon>
        <taxon>Murinae</taxon>
        <taxon>Mus</taxon>
        <taxon>Mus</taxon>
    </lineage>
</organism>
<gene>
    <name type="primary">Lgals1</name>
    <name type="synonym">Gbp</name>
</gene>
<name>LEG1_MOUSE</name>
<evidence type="ECO:0000250" key="1"/>
<evidence type="ECO:0000250" key="2">
    <source>
        <dbReference type="UniProtKB" id="P09382"/>
    </source>
</evidence>
<evidence type="ECO:0000255" key="3">
    <source>
        <dbReference type="PROSITE-ProRule" id="PRU00639"/>
    </source>
</evidence>
<evidence type="ECO:0000269" key="4">
    <source>
    </source>
</evidence>
<evidence type="ECO:0000305" key="5"/>
<evidence type="ECO:0000305" key="6">
    <source>
    </source>
</evidence>
<evidence type="ECO:0007744" key="7">
    <source>
    </source>
</evidence>
<evidence type="ECO:0007829" key="8">
    <source>
        <dbReference type="PDB" id="4LBQ"/>
    </source>
</evidence>